<gene>
    <name type="ordered locus">Pa_2_5430</name>
    <name type="ORF">PODANS_2_5430</name>
</gene>
<reference key="1">
    <citation type="journal article" date="2008" name="Genome Biol.">
        <title>The genome sequence of the model ascomycete fungus Podospora anserina.</title>
        <authorList>
            <person name="Espagne E."/>
            <person name="Lespinet O."/>
            <person name="Malagnac F."/>
            <person name="Da Silva C."/>
            <person name="Jaillon O."/>
            <person name="Porcel B.M."/>
            <person name="Couloux A."/>
            <person name="Aury J.-M."/>
            <person name="Segurens B."/>
            <person name="Poulain J."/>
            <person name="Anthouard V."/>
            <person name="Grossetete S."/>
            <person name="Khalili H."/>
            <person name="Coppin E."/>
            <person name="Dequard-Chablat M."/>
            <person name="Picard M."/>
            <person name="Contamine V."/>
            <person name="Arnaise S."/>
            <person name="Bourdais A."/>
            <person name="Berteaux-Lecellier V."/>
            <person name="Gautheret D."/>
            <person name="de Vries R.P."/>
            <person name="Battaglia E."/>
            <person name="Coutinho P.M."/>
            <person name="Danchin E.G.J."/>
            <person name="Henrissat B."/>
            <person name="El Khoury R."/>
            <person name="Sainsard-Chanet A."/>
            <person name="Boivin A."/>
            <person name="Pinan-Lucarre B."/>
            <person name="Sellem C.H."/>
            <person name="Debuchy R."/>
            <person name="Wincker P."/>
            <person name="Weissenbach J."/>
            <person name="Silar P."/>
        </authorList>
    </citation>
    <scope>NUCLEOTIDE SEQUENCE [LARGE SCALE GENOMIC DNA]</scope>
    <source>
        <strain>S / ATCC MYA-4624 / DSM 980 / FGSC 10383</strain>
    </source>
</reference>
<reference key="2">
    <citation type="journal article" date="2014" name="Genetics">
        <title>Maintaining two mating types: Structure of the mating type locus and its role in heterokaryosis in Podospora anserina.</title>
        <authorList>
            <person name="Grognet P."/>
            <person name="Bidard F."/>
            <person name="Kuchly C."/>
            <person name="Tong L.C.H."/>
            <person name="Coppin E."/>
            <person name="Benkhali J.A."/>
            <person name="Couloux A."/>
            <person name="Wincker P."/>
            <person name="Debuchy R."/>
            <person name="Silar P."/>
        </authorList>
    </citation>
    <scope>GENOME REANNOTATION</scope>
    <source>
        <strain>S / ATCC MYA-4624 / DSM 980 / FGSC 10383</strain>
    </source>
</reference>
<accession>B2B5Q3</accession>
<accession>A0A090CD41</accession>
<comment type="function">
    <text evidence="1">Pyrophosphatase that hydrolyzes non-canonical purine nucleotides such as inosine triphosphate (ITP), deoxyinosine triphosphate (dITP) or xanthosine 5'-triphosphate (XTP) to their respective monophosphate derivatives. The enzyme does not distinguish between the deoxy- and ribose forms. Probably excludes non-canonical purines from RNA and DNA precursor pools, thus preventing their incorporation into RNA and DNA and avoiding chromosomal lesions.</text>
</comment>
<comment type="catalytic activity">
    <reaction evidence="1">
        <text>ITP + H2O = IMP + diphosphate + H(+)</text>
        <dbReference type="Rhea" id="RHEA:29399"/>
        <dbReference type="ChEBI" id="CHEBI:15377"/>
        <dbReference type="ChEBI" id="CHEBI:15378"/>
        <dbReference type="ChEBI" id="CHEBI:33019"/>
        <dbReference type="ChEBI" id="CHEBI:58053"/>
        <dbReference type="ChEBI" id="CHEBI:61402"/>
        <dbReference type="EC" id="3.6.1.66"/>
    </reaction>
    <physiologicalReaction direction="left-to-right" evidence="1">
        <dbReference type="Rhea" id="RHEA:29400"/>
    </physiologicalReaction>
</comment>
<comment type="catalytic activity">
    <reaction evidence="1">
        <text>dITP + H2O = dIMP + diphosphate + H(+)</text>
        <dbReference type="Rhea" id="RHEA:28342"/>
        <dbReference type="ChEBI" id="CHEBI:15377"/>
        <dbReference type="ChEBI" id="CHEBI:15378"/>
        <dbReference type="ChEBI" id="CHEBI:33019"/>
        <dbReference type="ChEBI" id="CHEBI:61194"/>
        <dbReference type="ChEBI" id="CHEBI:61382"/>
        <dbReference type="EC" id="3.6.1.66"/>
    </reaction>
    <physiologicalReaction direction="left-to-right" evidence="1">
        <dbReference type="Rhea" id="RHEA:28343"/>
    </physiologicalReaction>
</comment>
<comment type="catalytic activity">
    <reaction evidence="1">
        <text>XTP + H2O = XMP + diphosphate + H(+)</text>
        <dbReference type="Rhea" id="RHEA:28610"/>
        <dbReference type="ChEBI" id="CHEBI:15377"/>
        <dbReference type="ChEBI" id="CHEBI:15378"/>
        <dbReference type="ChEBI" id="CHEBI:33019"/>
        <dbReference type="ChEBI" id="CHEBI:57464"/>
        <dbReference type="ChEBI" id="CHEBI:61314"/>
        <dbReference type="EC" id="3.6.1.66"/>
    </reaction>
    <physiologicalReaction direction="left-to-right" evidence="1">
        <dbReference type="Rhea" id="RHEA:28611"/>
    </physiologicalReaction>
</comment>
<comment type="cofactor">
    <cofactor evidence="1">
        <name>Mg(2+)</name>
        <dbReference type="ChEBI" id="CHEBI:18420"/>
    </cofactor>
    <cofactor evidence="1">
        <name>Mn(2+)</name>
        <dbReference type="ChEBI" id="CHEBI:29035"/>
    </cofactor>
    <text evidence="1">Binds 1 divalent metal cation per subunit; can use either Mg(2+) or Mn(2+).</text>
</comment>
<comment type="subunit">
    <text evidence="1">Homodimer.</text>
</comment>
<comment type="subcellular location">
    <subcellularLocation>
        <location evidence="1">Cytoplasm</location>
    </subcellularLocation>
    <subcellularLocation>
        <location evidence="1">Nucleus</location>
    </subcellularLocation>
</comment>
<comment type="similarity">
    <text evidence="1">Belongs to the HAM1 NTPase family.</text>
</comment>
<comment type="sequence caution" evidence="2">
    <conflict type="erroneous initiation">
        <sequence resource="EMBL-CDS" id="CAP73128"/>
    </conflict>
    <text>Extended N-terminus.</text>
</comment>
<comment type="sequence caution" evidence="2">
    <conflict type="erroneous initiation">
        <sequence resource="EMBL-CDS" id="CDP25530"/>
    </conflict>
    <text>Extended N-terminus.</text>
</comment>
<name>ITPA_PODAN</name>
<organism>
    <name type="scientific">Podospora anserina (strain S / ATCC MYA-4624 / DSM 980 / FGSC 10383)</name>
    <name type="common">Pleurage anserina</name>
    <dbReference type="NCBI Taxonomy" id="515849"/>
    <lineage>
        <taxon>Eukaryota</taxon>
        <taxon>Fungi</taxon>
        <taxon>Dikarya</taxon>
        <taxon>Ascomycota</taxon>
        <taxon>Pezizomycotina</taxon>
        <taxon>Sordariomycetes</taxon>
        <taxon>Sordariomycetidae</taxon>
        <taxon>Sordariales</taxon>
        <taxon>Podosporaceae</taxon>
        <taxon>Podospora</taxon>
        <taxon>Podospora anserina</taxon>
    </lineage>
</organism>
<proteinExistence type="inferred from homology"/>
<keyword id="KW-0963">Cytoplasm</keyword>
<keyword id="KW-0378">Hydrolase</keyword>
<keyword id="KW-0460">Magnesium</keyword>
<keyword id="KW-0464">Manganese</keyword>
<keyword id="KW-0479">Metal-binding</keyword>
<keyword id="KW-0546">Nucleotide metabolism</keyword>
<keyword id="KW-0547">Nucleotide-binding</keyword>
<keyword id="KW-0539">Nucleus</keyword>
<keyword id="KW-1185">Reference proteome</keyword>
<protein>
    <recommendedName>
        <fullName evidence="1">Inosine triphosphate pyrophosphatase</fullName>
        <shortName evidence="1">ITPase</shortName>
        <shortName evidence="1">Inosine triphosphatase</shortName>
        <ecNumber evidence="1">3.6.1.66</ecNumber>
    </recommendedName>
    <alternativeName>
        <fullName evidence="1">Non-canonical purine NTP pyrophosphatase</fullName>
    </alternativeName>
    <alternativeName>
        <fullName evidence="1">Non-standard purine NTP pyrophosphatase</fullName>
    </alternativeName>
    <alternativeName>
        <fullName evidence="1">Nucleoside-triphosphate diphosphatase</fullName>
    </alternativeName>
    <alternativeName>
        <fullName evidence="1">Nucleoside-triphosphate pyrophosphatase</fullName>
        <shortName evidence="1">NTPase</shortName>
    </alternativeName>
    <alternativeName>
        <fullName evidence="1">XTP/dITP diphosphatase</fullName>
    </alternativeName>
</protein>
<dbReference type="EC" id="3.6.1.66" evidence="1"/>
<dbReference type="EMBL" id="CU640366">
    <property type="protein sequence ID" value="CAP73128.1"/>
    <property type="status" value="ALT_INIT"/>
    <property type="molecule type" value="Genomic_DNA"/>
</dbReference>
<dbReference type="EMBL" id="FO904937">
    <property type="protein sequence ID" value="CDP25530.1"/>
    <property type="status" value="ALT_INIT"/>
    <property type="molecule type" value="Genomic_DNA"/>
</dbReference>
<dbReference type="RefSeq" id="XP_001911303.1">
    <property type="nucleotide sequence ID" value="XM_001911268.1"/>
</dbReference>
<dbReference type="SMR" id="B2B5Q3"/>
<dbReference type="FunCoup" id="B2B5Q3">
    <property type="interactions" value="719"/>
</dbReference>
<dbReference type="STRING" id="515849.B2B5Q3"/>
<dbReference type="GeneID" id="6196555"/>
<dbReference type="KEGG" id="pan:PODANSg8345"/>
<dbReference type="eggNOG" id="KOG3222">
    <property type="taxonomic scope" value="Eukaryota"/>
</dbReference>
<dbReference type="HOGENOM" id="CLU_082080_1_1_1"/>
<dbReference type="InParanoid" id="B2B5Q3"/>
<dbReference type="OrthoDB" id="6288734at2759"/>
<dbReference type="Proteomes" id="UP000001197">
    <property type="component" value="Chromosome 2"/>
</dbReference>
<dbReference type="GO" id="GO:0005737">
    <property type="term" value="C:cytoplasm"/>
    <property type="evidence" value="ECO:0007669"/>
    <property type="project" value="UniProtKB-SubCell"/>
</dbReference>
<dbReference type="GO" id="GO:0005634">
    <property type="term" value="C:nucleus"/>
    <property type="evidence" value="ECO:0007669"/>
    <property type="project" value="UniProtKB-SubCell"/>
</dbReference>
<dbReference type="GO" id="GO:0035870">
    <property type="term" value="F:dITP diphosphatase activity"/>
    <property type="evidence" value="ECO:0007669"/>
    <property type="project" value="RHEA"/>
</dbReference>
<dbReference type="GO" id="GO:0036220">
    <property type="term" value="F:ITP diphosphatase activity"/>
    <property type="evidence" value="ECO:0007669"/>
    <property type="project" value="RHEA"/>
</dbReference>
<dbReference type="GO" id="GO:0046872">
    <property type="term" value="F:metal ion binding"/>
    <property type="evidence" value="ECO:0007669"/>
    <property type="project" value="UniProtKB-KW"/>
</dbReference>
<dbReference type="GO" id="GO:0000166">
    <property type="term" value="F:nucleotide binding"/>
    <property type="evidence" value="ECO:0007669"/>
    <property type="project" value="UniProtKB-KW"/>
</dbReference>
<dbReference type="GO" id="GO:0036222">
    <property type="term" value="F:XTP diphosphatase activity"/>
    <property type="evidence" value="ECO:0007669"/>
    <property type="project" value="RHEA"/>
</dbReference>
<dbReference type="GO" id="GO:0009204">
    <property type="term" value="P:deoxyribonucleoside triphosphate catabolic process"/>
    <property type="evidence" value="ECO:0007669"/>
    <property type="project" value="UniProtKB-UniRule"/>
</dbReference>
<dbReference type="GO" id="GO:0009117">
    <property type="term" value="P:nucleotide metabolic process"/>
    <property type="evidence" value="ECO:0007669"/>
    <property type="project" value="UniProtKB-KW"/>
</dbReference>
<dbReference type="CDD" id="cd00515">
    <property type="entry name" value="HAM1"/>
    <property type="match status" value="1"/>
</dbReference>
<dbReference type="FunFam" id="3.90.950.10:FF:000003">
    <property type="entry name" value="Inosine triphosphate pyrophosphatase"/>
    <property type="match status" value="1"/>
</dbReference>
<dbReference type="Gene3D" id="3.90.950.10">
    <property type="match status" value="1"/>
</dbReference>
<dbReference type="HAMAP" id="MF_03148">
    <property type="entry name" value="HAM1_NTPase"/>
    <property type="match status" value="1"/>
</dbReference>
<dbReference type="InterPro" id="IPR027502">
    <property type="entry name" value="ITPase"/>
</dbReference>
<dbReference type="InterPro" id="IPR029001">
    <property type="entry name" value="ITPase-like_fam"/>
</dbReference>
<dbReference type="InterPro" id="IPR002637">
    <property type="entry name" value="RdgB/HAM1"/>
</dbReference>
<dbReference type="NCBIfam" id="TIGR00042">
    <property type="entry name" value="RdgB/HAM1 family non-canonical purine NTP pyrophosphatase"/>
    <property type="match status" value="1"/>
</dbReference>
<dbReference type="PANTHER" id="PTHR11067:SF9">
    <property type="entry name" value="INOSINE TRIPHOSPHATE PYROPHOSPHATASE"/>
    <property type="match status" value="1"/>
</dbReference>
<dbReference type="PANTHER" id="PTHR11067">
    <property type="entry name" value="INOSINE TRIPHOSPHATE PYROPHOSPHATASE/HAM1 PROTEIN"/>
    <property type="match status" value="1"/>
</dbReference>
<dbReference type="Pfam" id="PF01725">
    <property type="entry name" value="Ham1p_like"/>
    <property type="match status" value="1"/>
</dbReference>
<dbReference type="SUPFAM" id="SSF52972">
    <property type="entry name" value="ITPase-like"/>
    <property type="match status" value="1"/>
</dbReference>
<sequence>MTEARHQVNFITGNANKLSEVKAILEPAISVTNQSLDLVEIQGTLEEVTIDKCRRAAELVGGPVLVEDTCLCFDALQDLPGPYIKWFLGSIGHEGLNNMLLAYEDKGAKAVCTFGYSAGPGHEPILFQGITHGKIVPARGPSNFGWDPIFEYEGKTYAEMDKAEKNKISHRSRALAKLQEWFAKEMTA</sequence>
<evidence type="ECO:0000255" key="1">
    <source>
        <dbReference type="HAMAP-Rule" id="MF_03148"/>
    </source>
</evidence>
<evidence type="ECO:0000305" key="2"/>
<feature type="chain" id="PRO_0000413147" description="Inosine triphosphate pyrophosphatase">
    <location>
        <begin position="1"/>
        <end position="188"/>
    </location>
</feature>
<feature type="binding site" evidence="1">
    <location>
        <begin position="12"/>
        <end position="17"/>
    </location>
    <ligand>
        <name>ITP</name>
        <dbReference type="ChEBI" id="CHEBI:61402"/>
    </ligand>
</feature>
<feature type="binding site" evidence="1">
    <location>
        <position position="40"/>
    </location>
    <ligand>
        <name>Mg(2+)</name>
        <dbReference type="ChEBI" id="CHEBI:18420"/>
    </ligand>
</feature>
<feature type="binding site" evidence="1">
    <location>
        <position position="52"/>
    </location>
    <ligand>
        <name>ITP</name>
        <dbReference type="ChEBI" id="CHEBI:61402"/>
    </ligand>
</feature>
<feature type="binding site" evidence="1">
    <location>
        <begin position="68"/>
        <end position="69"/>
    </location>
    <ligand>
        <name>ITP</name>
        <dbReference type="ChEBI" id="CHEBI:61402"/>
    </ligand>
</feature>
<feature type="binding site" evidence="1">
    <location>
        <position position="85"/>
    </location>
    <ligand>
        <name>ITP</name>
        <dbReference type="ChEBI" id="CHEBI:61402"/>
    </ligand>
</feature>
<feature type="binding site" evidence="1">
    <location>
        <begin position="144"/>
        <end position="147"/>
    </location>
    <ligand>
        <name>ITP</name>
        <dbReference type="ChEBI" id="CHEBI:61402"/>
    </ligand>
</feature>
<feature type="binding site" evidence="1">
    <location>
        <position position="165"/>
    </location>
    <ligand>
        <name>ITP</name>
        <dbReference type="ChEBI" id="CHEBI:61402"/>
    </ligand>
</feature>
<feature type="binding site" evidence="1">
    <location>
        <begin position="170"/>
        <end position="171"/>
    </location>
    <ligand>
        <name>ITP</name>
        <dbReference type="ChEBI" id="CHEBI:61402"/>
    </ligand>
</feature>